<feature type="chain" id="PRO_0000101554" description="Ribosomal RNA small subunit methyltransferase A">
    <location>
        <begin position="1"/>
        <end position="288"/>
    </location>
</feature>
<feature type="binding site" evidence="1">
    <location>
        <position position="18"/>
    </location>
    <ligand>
        <name>S-adenosyl-L-methionine</name>
        <dbReference type="ChEBI" id="CHEBI:59789"/>
    </ligand>
</feature>
<feature type="binding site" evidence="1">
    <location>
        <position position="20"/>
    </location>
    <ligand>
        <name>S-adenosyl-L-methionine</name>
        <dbReference type="ChEBI" id="CHEBI:59789"/>
    </ligand>
</feature>
<feature type="binding site" evidence="1">
    <location>
        <position position="45"/>
    </location>
    <ligand>
        <name>S-adenosyl-L-methionine</name>
        <dbReference type="ChEBI" id="CHEBI:59789"/>
    </ligand>
</feature>
<feature type="binding site" evidence="1">
    <location>
        <position position="66"/>
    </location>
    <ligand>
        <name>S-adenosyl-L-methionine</name>
        <dbReference type="ChEBI" id="CHEBI:59789"/>
    </ligand>
</feature>
<feature type="binding site" evidence="1">
    <location>
        <position position="91"/>
    </location>
    <ligand>
        <name>S-adenosyl-L-methionine</name>
        <dbReference type="ChEBI" id="CHEBI:59789"/>
    </ligand>
</feature>
<feature type="binding site" evidence="1">
    <location>
        <position position="118"/>
    </location>
    <ligand>
        <name>S-adenosyl-L-methionine</name>
        <dbReference type="ChEBI" id="CHEBI:59789"/>
    </ligand>
</feature>
<keyword id="KW-0963">Cytoplasm</keyword>
<keyword id="KW-0489">Methyltransferase</keyword>
<keyword id="KW-0694">RNA-binding</keyword>
<keyword id="KW-0698">rRNA processing</keyword>
<keyword id="KW-0949">S-adenosyl-L-methionine</keyword>
<keyword id="KW-0808">Transferase</keyword>
<reference key="1">
    <citation type="journal article" date="2004" name="Nat. Biotechnol.">
        <title>The genome sequence of the capnophilic rumen bacterium Mannheimia succiniciproducens.</title>
        <authorList>
            <person name="Hong S.H."/>
            <person name="Kim J.S."/>
            <person name="Lee S.Y."/>
            <person name="In Y.H."/>
            <person name="Choi S.S."/>
            <person name="Rih J.-K."/>
            <person name="Kim C.H."/>
            <person name="Jeong H."/>
            <person name="Hur C.G."/>
            <person name="Kim J.J."/>
        </authorList>
    </citation>
    <scope>NUCLEOTIDE SEQUENCE [LARGE SCALE GENOMIC DNA]</scope>
    <source>
        <strain>KCTC 0769BP / MBEL55E</strain>
    </source>
</reference>
<protein>
    <recommendedName>
        <fullName evidence="1">Ribosomal RNA small subunit methyltransferase A</fullName>
        <ecNumber evidence="1">2.1.1.182</ecNumber>
    </recommendedName>
    <alternativeName>
        <fullName evidence="1">16S rRNA (adenine(1518)-N(6)/adenine(1519)-N(6))-dimethyltransferase</fullName>
    </alternativeName>
    <alternativeName>
        <fullName evidence="1">16S rRNA dimethyladenosine transferase</fullName>
    </alternativeName>
    <alternativeName>
        <fullName evidence="1">16S rRNA dimethylase</fullName>
    </alternativeName>
    <alternativeName>
        <fullName evidence="1">S-adenosylmethionine-6-N', N'-adenosyl(rRNA) dimethyltransferase</fullName>
    </alternativeName>
</protein>
<name>RSMA_MANSM</name>
<evidence type="ECO:0000255" key="1">
    <source>
        <dbReference type="HAMAP-Rule" id="MF_00607"/>
    </source>
</evidence>
<accession>Q65UX3</accession>
<comment type="function">
    <text evidence="1">Specifically dimethylates two adjacent adenosines (A1518 and A1519) in the loop of a conserved hairpin near the 3'-end of 16S rRNA in the 30S particle. May play a critical role in biogenesis of 30S subunits.</text>
</comment>
<comment type="catalytic activity">
    <reaction evidence="1">
        <text>adenosine(1518)/adenosine(1519) in 16S rRNA + 4 S-adenosyl-L-methionine = N(6)-dimethyladenosine(1518)/N(6)-dimethyladenosine(1519) in 16S rRNA + 4 S-adenosyl-L-homocysteine + 4 H(+)</text>
        <dbReference type="Rhea" id="RHEA:19609"/>
        <dbReference type="Rhea" id="RHEA-COMP:10232"/>
        <dbReference type="Rhea" id="RHEA-COMP:10233"/>
        <dbReference type="ChEBI" id="CHEBI:15378"/>
        <dbReference type="ChEBI" id="CHEBI:57856"/>
        <dbReference type="ChEBI" id="CHEBI:59789"/>
        <dbReference type="ChEBI" id="CHEBI:74411"/>
        <dbReference type="ChEBI" id="CHEBI:74493"/>
        <dbReference type="EC" id="2.1.1.182"/>
    </reaction>
</comment>
<comment type="subcellular location">
    <subcellularLocation>
        <location evidence="1">Cytoplasm</location>
    </subcellularLocation>
</comment>
<comment type="similarity">
    <text evidence="1">Belongs to the class I-like SAM-binding methyltransferase superfamily. rRNA adenine N(6)-methyltransferase family. RsmA subfamily.</text>
</comment>
<gene>
    <name evidence="1" type="primary">rsmA</name>
    <name evidence="1" type="synonym">ksgA</name>
    <name type="ordered locus">MS0630</name>
</gene>
<proteinExistence type="inferred from homology"/>
<dbReference type="EC" id="2.1.1.182" evidence="1"/>
<dbReference type="EMBL" id="AE016827">
    <property type="protein sequence ID" value="AAU37237.1"/>
    <property type="molecule type" value="Genomic_DNA"/>
</dbReference>
<dbReference type="RefSeq" id="WP_011199809.1">
    <property type="nucleotide sequence ID" value="NC_006300.1"/>
</dbReference>
<dbReference type="SMR" id="Q65UX3"/>
<dbReference type="STRING" id="221988.MS0630"/>
<dbReference type="KEGG" id="msu:MS0630"/>
<dbReference type="eggNOG" id="COG0030">
    <property type="taxonomic scope" value="Bacteria"/>
</dbReference>
<dbReference type="HOGENOM" id="CLU_041220_0_1_6"/>
<dbReference type="OrthoDB" id="9814755at2"/>
<dbReference type="Proteomes" id="UP000000607">
    <property type="component" value="Chromosome"/>
</dbReference>
<dbReference type="GO" id="GO:0005829">
    <property type="term" value="C:cytosol"/>
    <property type="evidence" value="ECO:0007669"/>
    <property type="project" value="TreeGrafter"/>
</dbReference>
<dbReference type="GO" id="GO:0052908">
    <property type="term" value="F:16S rRNA (adenine(1518)-N(6)/adenine(1519)-N(6))-dimethyltransferase activity"/>
    <property type="evidence" value="ECO:0007669"/>
    <property type="project" value="UniProtKB-EC"/>
</dbReference>
<dbReference type="GO" id="GO:0003723">
    <property type="term" value="F:RNA binding"/>
    <property type="evidence" value="ECO:0007669"/>
    <property type="project" value="UniProtKB-KW"/>
</dbReference>
<dbReference type="FunFam" id="1.10.8.100:FF:000001">
    <property type="entry name" value="Ribosomal RNA small subunit methyltransferase A"/>
    <property type="match status" value="1"/>
</dbReference>
<dbReference type="FunFam" id="3.40.50.150:FF:000006">
    <property type="entry name" value="Ribosomal RNA small subunit methyltransferase A"/>
    <property type="match status" value="1"/>
</dbReference>
<dbReference type="Gene3D" id="1.10.8.100">
    <property type="entry name" value="Ribosomal RNA adenine dimethylase-like, domain 2"/>
    <property type="match status" value="1"/>
</dbReference>
<dbReference type="Gene3D" id="3.40.50.150">
    <property type="entry name" value="Vaccinia Virus protein VP39"/>
    <property type="match status" value="1"/>
</dbReference>
<dbReference type="HAMAP" id="MF_00607">
    <property type="entry name" value="16SrRNA_methyltr_A"/>
    <property type="match status" value="1"/>
</dbReference>
<dbReference type="InterPro" id="IPR001737">
    <property type="entry name" value="KsgA/Erm"/>
</dbReference>
<dbReference type="InterPro" id="IPR023165">
    <property type="entry name" value="rRNA_Ade_diMease-like_C"/>
</dbReference>
<dbReference type="InterPro" id="IPR020596">
    <property type="entry name" value="rRNA_Ade_Mease_Trfase_CS"/>
</dbReference>
<dbReference type="InterPro" id="IPR020598">
    <property type="entry name" value="rRNA_Ade_methylase_Trfase_N"/>
</dbReference>
<dbReference type="InterPro" id="IPR011530">
    <property type="entry name" value="rRNA_adenine_dimethylase"/>
</dbReference>
<dbReference type="InterPro" id="IPR029063">
    <property type="entry name" value="SAM-dependent_MTases_sf"/>
</dbReference>
<dbReference type="NCBIfam" id="TIGR00755">
    <property type="entry name" value="ksgA"/>
    <property type="match status" value="1"/>
</dbReference>
<dbReference type="PANTHER" id="PTHR11727">
    <property type="entry name" value="DIMETHYLADENOSINE TRANSFERASE"/>
    <property type="match status" value="1"/>
</dbReference>
<dbReference type="PANTHER" id="PTHR11727:SF7">
    <property type="entry name" value="DIMETHYLADENOSINE TRANSFERASE-RELATED"/>
    <property type="match status" value="1"/>
</dbReference>
<dbReference type="Pfam" id="PF00398">
    <property type="entry name" value="RrnaAD"/>
    <property type="match status" value="1"/>
</dbReference>
<dbReference type="SMART" id="SM00650">
    <property type="entry name" value="rADc"/>
    <property type="match status" value="1"/>
</dbReference>
<dbReference type="SUPFAM" id="SSF53335">
    <property type="entry name" value="S-adenosyl-L-methionine-dependent methyltransferases"/>
    <property type="match status" value="1"/>
</dbReference>
<dbReference type="PROSITE" id="PS01131">
    <property type="entry name" value="RRNA_A_DIMETH"/>
    <property type="match status" value="1"/>
</dbReference>
<dbReference type="PROSITE" id="PS51689">
    <property type="entry name" value="SAM_RNA_A_N6_MT"/>
    <property type="match status" value="1"/>
</dbReference>
<sequence>MNSKRHLGHTARKRFGQNFLHDDNVIQGIVAAIYPQKGQFLVEIGPGLGALTEPVADQTDRLTVVELDRDLAQRLRHHPFLHQKLNVIETDAMQFDFGKLYEDEHLAEQGQKLRVFGNLPYNISTPLIFHLLKFYDKIQDMHFMLQKEVVKRLCAAPNSKAYGRLTIMTQYFCQVMPVLEVPPTAFKPAPKVDSAVVRLIPHKELPHPVKDLYWLNRVTSQAFNQRRKTLRNALSTLFTPEQLTALNIDLTARAENLSIADYARLANWLADNPPADVRRDEIIEENEE</sequence>
<organism>
    <name type="scientific">Mannheimia succiniciproducens (strain KCTC 0769BP / MBEL55E)</name>
    <dbReference type="NCBI Taxonomy" id="221988"/>
    <lineage>
        <taxon>Bacteria</taxon>
        <taxon>Pseudomonadati</taxon>
        <taxon>Pseudomonadota</taxon>
        <taxon>Gammaproteobacteria</taxon>
        <taxon>Pasteurellales</taxon>
        <taxon>Pasteurellaceae</taxon>
        <taxon>Basfia</taxon>
    </lineage>
</organism>